<sequence length="398" mass="44226">MLLEHPGSSCQNAGNYTRYSSSQDIPVCAGCNQHIVDRFILKVLDRHWHSKCLKCSDCQSQLADKCFSRGDSVYCKDDFFKRFGTKCAACQQGIPPTQVVRRAQDFVYHLHCFACIVCKRQLATGDEYYLMEDSRLVCKADYETAKQREADSTAKRPRTTITAKQLETLKNAYNNSPKPARHVREQLSTETGLDMRVVQVWFQNRRAKEKRLKKDAGRQRWGQYFRNMKRSRGTSKSDKDSTQEDGMDSDAEVSFTDEPPMSDLGHSNGIYSSLSESSPALSRQGGNHPAFPLEHGAIIPSQEPYHDIQASSPYSLPQSPGPLQPLPRHQPLISSLVYPESGLPMAGQSGGQDMTPGVRMMAAGNGPSSDLSTGSSGGYPDFPASPASWLDEVDHAQF</sequence>
<dbReference type="EMBL" id="U34590">
    <property type="protein sequence ID" value="AAA76714.1"/>
    <property type="molecule type" value="mRNA"/>
</dbReference>
<dbReference type="RefSeq" id="NP_571283.1">
    <property type="nucleotide sequence ID" value="NM_131208.1"/>
</dbReference>
<dbReference type="SMR" id="Q90421"/>
<dbReference type="FunCoup" id="Q90421">
    <property type="interactions" value="511"/>
</dbReference>
<dbReference type="STRING" id="7955.ENSDARP00000087936"/>
<dbReference type="GeneID" id="30455"/>
<dbReference type="KEGG" id="dre:30455"/>
<dbReference type="AGR" id="ZFIN:ZDB-GENE-980526-131"/>
<dbReference type="CTD" id="8022"/>
<dbReference type="ZFIN" id="ZDB-GENE-980526-131">
    <property type="gene designation" value="lhx3"/>
</dbReference>
<dbReference type="InParanoid" id="Q90421"/>
<dbReference type="OrthoDB" id="10068367at2759"/>
<dbReference type="PhylomeDB" id="Q90421"/>
<dbReference type="PRO" id="PR:Q90421"/>
<dbReference type="Proteomes" id="UP000000437">
    <property type="component" value="Chromosome 5"/>
</dbReference>
<dbReference type="GO" id="GO:0005634">
    <property type="term" value="C:nucleus"/>
    <property type="evidence" value="ECO:0000318"/>
    <property type="project" value="GO_Central"/>
</dbReference>
<dbReference type="GO" id="GO:0000981">
    <property type="term" value="F:DNA-binding transcription factor activity, RNA polymerase II-specific"/>
    <property type="evidence" value="ECO:0000318"/>
    <property type="project" value="GO_Central"/>
</dbReference>
<dbReference type="GO" id="GO:0000977">
    <property type="term" value="F:RNA polymerase II transcription regulatory region sequence-specific DNA binding"/>
    <property type="evidence" value="ECO:0000318"/>
    <property type="project" value="GO_Central"/>
</dbReference>
<dbReference type="GO" id="GO:0008270">
    <property type="term" value="F:zinc ion binding"/>
    <property type="evidence" value="ECO:0007669"/>
    <property type="project" value="InterPro"/>
</dbReference>
<dbReference type="GO" id="GO:0030182">
    <property type="term" value="P:neuron differentiation"/>
    <property type="evidence" value="ECO:0000318"/>
    <property type="project" value="GO_Central"/>
</dbReference>
<dbReference type="GO" id="GO:0006357">
    <property type="term" value="P:regulation of transcription by RNA polymerase II"/>
    <property type="evidence" value="ECO:0000318"/>
    <property type="project" value="GO_Central"/>
</dbReference>
<dbReference type="GO" id="GO:0021521">
    <property type="term" value="P:ventral spinal cord interneuron specification"/>
    <property type="evidence" value="ECO:0000316"/>
    <property type="project" value="ZFIN"/>
</dbReference>
<dbReference type="CDD" id="cd00086">
    <property type="entry name" value="homeodomain"/>
    <property type="match status" value="1"/>
</dbReference>
<dbReference type="CDD" id="cd09467">
    <property type="entry name" value="LIM1_Lhx3b"/>
    <property type="match status" value="1"/>
</dbReference>
<dbReference type="CDD" id="cd09376">
    <property type="entry name" value="LIM2_Lhx3_Lhx4"/>
    <property type="match status" value="1"/>
</dbReference>
<dbReference type="FunFam" id="2.10.110.10:FF:000120">
    <property type="entry name" value="Insulin gene enhancer protein ISL-2"/>
    <property type="match status" value="1"/>
</dbReference>
<dbReference type="FunFam" id="1.10.10.60:FF:000219">
    <property type="entry name" value="LIM/homeobox protein Lhx3"/>
    <property type="match status" value="1"/>
</dbReference>
<dbReference type="FunFam" id="2.10.110.10:FF:000032">
    <property type="entry name" value="LIM/homeobox protein Lhx3"/>
    <property type="match status" value="1"/>
</dbReference>
<dbReference type="Gene3D" id="2.10.110.10">
    <property type="entry name" value="Cysteine Rich Protein"/>
    <property type="match status" value="2"/>
</dbReference>
<dbReference type="Gene3D" id="1.10.10.60">
    <property type="entry name" value="Homeodomain-like"/>
    <property type="match status" value="1"/>
</dbReference>
<dbReference type="InterPro" id="IPR001356">
    <property type="entry name" value="HD"/>
</dbReference>
<dbReference type="InterPro" id="IPR017970">
    <property type="entry name" value="Homeobox_CS"/>
</dbReference>
<dbReference type="InterPro" id="IPR009057">
    <property type="entry name" value="Homeodomain-like_sf"/>
</dbReference>
<dbReference type="InterPro" id="IPR049594">
    <property type="entry name" value="Lhx3/4-like_LIM2"/>
</dbReference>
<dbReference type="InterPro" id="IPR049593">
    <property type="entry name" value="Lhx3_LIM1"/>
</dbReference>
<dbReference type="InterPro" id="IPR050453">
    <property type="entry name" value="LIM_Homeobox_TF"/>
</dbReference>
<dbReference type="InterPro" id="IPR001781">
    <property type="entry name" value="Znf_LIM"/>
</dbReference>
<dbReference type="PANTHER" id="PTHR24208">
    <property type="entry name" value="LIM/HOMEOBOX PROTEIN LHX"/>
    <property type="match status" value="1"/>
</dbReference>
<dbReference type="PANTHER" id="PTHR24208:SF91">
    <property type="entry name" value="LIM_HOMEOBOX PROTEIN LHX3"/>
    <property type="match status" value="1"/>
</dbReference>
<dbReference type="Pfam" id="PF00046">
    <property type="entry name" value="Homeodomain"/>
    <property type="match status" value="1"/>
</dbReference>
<dbReference type="Pfam" id="PF00412">
    <property type="entry name" value="LIM"/>
    <property type="match status" value="2"/>
</dbReference>
<dbReference type="SMART" id="SM00389">
    <property type="entry name" value="HOX"/>
    <property type="match status" value="1"/>
</dbReference>
<dbReference type="SMART" id="SM00132">
    <property type="entry name" value="LIM"/>
    <property type="match status" value="2"/>
</dbReference>
<dbReference type="SUPFAM" id="SSF57716">
    <property type="entry name" value="Glucocorticoid receptor-like (DNA-binding domain)"/>
    <property type="match status" value="2"/>
</dbReference>
<dbReference type="SUPFAM" id="SSF46689">
    <property type="entry name" value="Homeodomain-like"/>
    <property type="match status" value="1"/>
</dbReference>
<dbReference type="PROSITE" id="PS00027">
    <property type="entry name" value="HOMEOBOX_1"/>
    <property type="match status" value="1"/>
</dbReference>
<dbReference type="PROSITE" id="PS50071">
    <property type="entry name" value="HOMEOBOX_2"/>
    <property type="match status" value="1"/>
</dbReference>
<dbReference type="PROSITE" id="PS00478">
    <property type="entry name" value="LIM_DOMAIN_1"/>
    <property type="match status" value="2"/>
</dbReference>
<dbReference type="PROSITE" id="PS50023">
    <property type="entry name" value="LIM_DOMAIN_2"/>
    <property type="match status" value="2"/>
</dbReference>
<organism>
    <name type="scientific">Danio rerio</name>
    <name type="common">Zebrafish</name>
    <name type="synonym">Brachydanio rerio</name>
    <dbReference type="NCBI Taxonomy" id="7955"/>
    <lineage>
        <taxon>Eukaryota</taxon>
        <taxon>Metazoa</taxon>
        <taxon>Chordata</taxon>
        <taxon>Craniata</taxon>
        <taxon>Vertebrata</taxon>
        <taxon>Euteleostomi</taxon>
        <taxon>Actinopterygii</taxon>
        <taxon>Neopterygii</taxon>
        <taxon>Teleostei</taxon>
        <taxon>Ostariophysi</taxon>
        <taxon>Cypriniformes</taxon>
        <taxon>Danionidae</taxon>
        <taxon>Danioninae</taxon>
        <taxon>Danio</taxon>
    </lineage>
</organism>
<protein>
    <recommendedName>
        <fullName>LIM/homeobox protein Lhx3</fullName>
        <shortName>LIM homeobox protein 3</shortName>
    </recommendedName>
    <alternativeName>
        <fullName>Homeobox protein LIM-3</fullName>
    </alternativeName>
</protein>
<accession>Q90421</accession>
<keyword id="KW-0010">Activator</keyword>
<keyword id="KW-0238">DNA-binding</keyword>
<keyword id="KW-0371">Homeobox</keyword>
<keyword id="KW-0440">LIM domain</keyword>
<keyword id="KW-0479">Metal-binding</keyword>
<keyword id="KW-0539">Nucleus</keyword>
<keyword id="KW-1185">Reference proteome</keyword>
<keyword id="KW-0677">Repeat</keyword>
<keyword id="KW-0804">Transcription</keyword>
<keyword id="KW-0805">Transcription regulation</keyword>
<keyword id="KW-0862">Zinc</keyword>
<gene>
    <name type="primary">lhx3</name>
    <name type="synonym">lim3</name>
</gene>
<proteinExistence type="evidence at transcript level"/>
<evidence type="ECO:0000250" key="1">
    <source>
        <dbReference type="UniProtKB" id="P50481"/>
    </source>
</evidence>
<evidence type="ECO:0000255" key="2">
    <source>
        <dbReference type="PROSITE-ProRule" id="PRU00108"/>
    </source>
</evidence>
<evidence type="ECO:0000255" key="3">
    <source>
        <dbReference type="PROSITE-ProRule" id="PRU00125"/>
    </source>
</evidence>
<evidence type="ECO:0000256" key="4">
    <source>
        <dbReference type="SAM" id="MobiDB-lite"/>
    </source>
</evidence>
<comment type="function">
    <text evidence="1">Transcription factor.</text>
</comment>
<comment type="subcellular location">
    <subcellularLocation>
        <location evidence="2">Nucleus</location>
    </subcellularLocation>
</comment>
<name>LHX3_DANRE</name>
<feature type="chain" id="PRO_0000075785" description="LIM/homeobox protein Lhx3">
    <location>
        <begin position="1"/>
        <end position="398"/>
    </location>
</feature>
<feature type="domain" description="LIM zinc-binding 1" evidence="3">
    <location>
        <begin position="28"/>
        <end position="78"/>
    </location>
</feature>
<feature type="domain" description="LIM zinc-binding 2" evidence="3">
    <location>
        <begin position="87"/>
        <end position="141"/>
    </location>
</feature>
<feature type="DNA-binding region" description="Homeobox" evidence="2">
    <location>
        <begin position="154"/>
        <end position="213"/>
    </location>
</feature>
<feature type="region of interest" description="Disordered" evidence="4">
    <location>
        <begin position="208"/>
        <end position="294"/>
    </location>
</feature>
<feature type="region of interest" description="Disordered" evidence="4">
    <location>
        <begin position="307"/>
        <end position="398"/>
    </location>
</feature>
<feature type="compositionally biased region" description="Low complexity" evidence="4">
    <location>
        <begin position="272"/>
        <end position="282"/>
    </location>
</feature>
<reference key="1">
    <citation type="journal article" date="1995" name="Development">
        <title>Motoneuron fate specification revealed by patterned LIM homeobox gene expression in embryonic zebrafish.</title>
        <authorList>
            <person name="Appel B."/>
            <person name="Korzh V."/>
            <person name="Glasgow E."/>
            <person name="Thor S."/>
            <person name="Edlund T."/>
            <person name="Dawid I.B."/>
            <person name="Eisen J.S."/>
        </authorList>
    </citation>
    <scope>NUCLEOTIDE SEQUENCE [MRNA]</scope>
</reference>